<accession>P65439</accession>
<accession>Q99UT2</accession>
<name>MRAZ_STAAN</name>
<reference key="1">
    <citation type="journal article" date="2001" name="Lancet">
        <title>Whole genome sequencing of meticillin-resistant Staphylococcus aureus.</title>
        <authorList>
            <person name="Kuroda M."/>
            <person name="Ohta T."/>
            <person name="Uchiyama I."/>
            <person name="Baba T."/>
            <person name="Yuzawa H."/>
            <person name="Kobayashi I."/>
            <person name="Cui L."/>
            <person name="Oguchi A."/>
            <person name="Aoki K."/>
            <person name="Nagai Y."/>
            <person name="Lian J.-Q."/>
            <person name="Ito T."/>
            <person name="Kanamori M."/>
            <person name="Matsumaru H."/>
            <person name="Maruyama A."/>
            <person name="Murakami H."/>
            <person name="Hosoyama A."/>
            <person name="Mizutani-Ui Y."/>
            <person name="Takahashi N.K."/>
            <person name="Sawano T."/>
            <person name="Inoue R."/>
            <person name="Kaito C."/>
            <person name="Sekimizu K."/>
            <person name="Hirakawa H."/>
            <person name="Kuhara S."/>
            <person name="Goto S."/>
            <person name="Yabuzaki J."/>
            <person name="Kanehisa M."/>
            <person name="Yamashita A."/>
            <person name="Oshima K."/>
            <person name="Furuya K."/>
            <person name="Yoshino C."/>
            <person name="Shiba T."/>
            <person name="Hattori M."/>
            <person name="Ogasawara N."/>
            <person name="Hayashi H."/>
            <person name="Hiramatsu K."/>
        </authorList>
    </citation>
    <scope>NUCLEOTIDE SEQUENCE [LARGE SCALE GENOMIC DNA]</scope>
    <source>
        <strain>N315</strain>
    </source>
</reference>
<reference key="2">
    <citation type="submission" date="2007-10" db="UniProtKB">
        <title>Shotgun proteomic analysis of total and membrane protein extracts of S. aureus strain N315.</title>
        <authorList>
            <person name="Vaezzadeh A.R."/>
            <person name="Deshusses J."/>
            <person name="Lescuyer P."/>
            <person name="Hochstrasser D.F."/>
        </authorList>
    </citation>
    <scope>IDENTIFICATION BY MASS SPECTROMETRY [LARGE SCALE ANALYSIS]</scope>
    <source>
        <strain>N315</strain>
    </source>
</reference>
<comment type="subunit">
    <text evidence="1">Forms oligomers.</text>
</comment>
<comment type="subcellular location">
    <subcellularLocation>
        <location evidence="1">Cytoplasm</location>
        <location evidence="1">Nucleoid</location>
    </subcellularLocation>
</comment>
<comment type="similarity">
    <text evidence="1">Belongs to the MraZ family.</text>
</comment>
<evidence type="ECO:0000255" key="1">
    <source>
        <dbReference type="HAMAP-Rule" id="MF_01008"/>
    </source>
</evidence>
<evidence type="ECO:0000255" key="2">
    <source>
        <dbReference type="PROSITE-ProRule" id="PRU01076"/>
    </source>
</evidence>
<dbReference type="EMBL" id="BA000018">
    <property type="protein sequence ID" value="BAB42273.1"/>
    <property type="molecule type" value="Genomic_DNA"/>
</dbReference>
<dbReference type="PIR" id="E89889">
    <property type="entry name" value="E89889"/>
</dbReference>
<dbReference type="RefSeq" id="WP_000480800.1">
    <property type="nucleotide sequence ID" value="NC_002745.2"/>
</dbReference>
<dbReference type="SMR" id="P65439"/>
<dbReference type="EnsemblBacteria" id="BAB42273">
    <property type="protein sequence ID" value="BAB42273"/>
    <property type="gene ID" value="BAB42273"/>
</dbReference>
<dbReference type="GeneID" id="66839371"/>
<dbReference type="KEGG" id="sau:SA1021"/>
<dbReference type="HOGENOM" id="CLU_107907_0_5_9"/>
<dbReference type="GO" id="GO:0005737">
    <property type="term" value="C:cytoplasm"/>
    <property type="evidence" value="ECO:0007669"/>
    <property type="project" value="UniProtKB-UniRule"/>
</dbReference>
<dbReference type="GO" id="GO:0009295">
    <property type="term" value="C:nucleoid"/>
    <property type="evidence" value="ECO:0007669"/>
    <property type="project" value="UniProtKB-SubCell"/>
</dbReference>
<dbReference type="GO" id="GO:0003700">
    <property type="term" value="F:DNA-binding transcription factor activity"/>
    <property type="evidence" value="ECO:0007669"/>
    <property type="project" value="UniProtKB-UniRule"/>
</dbReference>
<dbReference type="GO" id="GO:0000976">
    <property type="term" value="F:transcription cis-regulatory region binding"/>
    <property type="evidence" value="ECO:0007669"/>
    <property type="project" value="TreeGrafter"/>
</dbReference>
<dbReference type="GO" id="GO:2000143">
    <property type="term" value="P:negative regulation of DNA-templated transcription initiation"/>
    <property type="evidence" value="ECO:0007669"/>
    <property type="project" value="TreeGrafter"/>
</dbReference>
<dbReference type="CDD" id="cd16321">
    <property type="entry name" value="MraZ_C"/>
    <property type="match status" value="1"/>
</dbReference>
<dbReference type="CDD" id="cd16320">
    <property type="entry name" value="MraZ_N"/>
    <property type="match status" value="1"/>
</dbReference>
<dbReference type="FunFam" id="3.40.1550.20:FF:000002">
    <property type="entry name" value="Transcriptional regulator MraZ"/>
    <property type="match status" value="1"/>
</dbReference>
<dbReference type="Gene3D" id="3.40.1550.20">
    <property type="entry name" value="Transcriptional regulator MraZ domain"/>
    <property type="match status" value="1"/>
</dbReference>
<dbReference type="HAMAP" id="MF_01008">
    <property type="entry name" value="MraZ"/>
    <property type="match status" value="1"/>
</dbReference>
<dbReference type="InterPro" id="IPR003444">
    <property type="entry name" value="MraZ"/>
</dbReference>
<dbReference type="InterPro" id="IPR035644">
    <property type="entry name" value="MraZ_C"/>
</dbReference>
<dbReference type="InterPro" id="IPR020603">
    <property type="entry name" value="MraZ_dom"/>
</dbReference>
<dbReference type="InterPro" id="IPR035642">
    <property type="entry name" value="MraZ_N"/>
</dbReference>
<dbReference type="InterPro" id="IPR038619">
    <property type="entry name" value="MraZ_sf"/>
</dbReference>
<dbReference type="InterPro" id="IPR007159">
    <property type="entry name" value="SpoVT-AbrB_dom"/>
</dbReference>
<dbReference type="InterPro" id="IPR037914">
    <property type="entry name" value="SpoVT-AbrB_sf"/>
</dbReference>
<dbReference type="NCBIfam" id="TIGR00242">
    <property type="entry name" value="division/cell wall cluster transcriptional repressor MraZ"/>
    <property type="match status" value="1"/>
</dbReference>
<dbReference type="PANTHER" id="PTHR34701">
    <property type="entry name" value="TRANSCRIPTIONAL REGULATOR MRAZ"/>
    <property type="match status" value="1"/>
</dbReference>
<dbReference type="PANTHER" id="PTHR34701:SF1">
    <property type="entry name" value="TRANSCRIPTIONAL REGULATOR MRAZ"/>
    <property type="match status" value="1"/>
</dbReference>
<dbReference type="Pfam" id="PF02381">
    <property type="entry name" value="MraZ"/>
    <property type="match status" value="2"/>
</dbReference>
<dbReference type="SUPFAM" id="SSF89447">
    <property type="entry name" value="AbrB/MazE/MraZ-like"/>
    <property type="match status" value="1"/>
</dbReference>
<dbReference type="PROSITE" id="PS51740">
    <property type="entry name" value="SPOVT_ABRB"/>
    <property type="match status" value="2"/>
</dbReference>
<gene>
    <name evidence="1" type="primary">mraZ</name>
    <name type="ordered locus">SA1021</name>
</gene>
<keyword id="KW-0963">Cytoplasm</keyword>
<keyword id="KW-0238">DNA-binding</keyword>
<keyword id="KW-0677">Repeat</keyword>
<keyword id="KW-0804">Transcription</keyword>
<keyword id="KW-0805">Transcription regulation</keyword>
<protein>
    <recommendedName>
        <fullName>Transcriptional regulator MraZ</fullName>
    </recommendedName>
</protein>
<proteinExistence type="evidence at protein level"/>
<organism>
    <name type="scientific">Staphylococcus aureus (strain N315)</name>
    <dbReference type="NCBI Taxonomy" id="158879"/>
    <lineage>
        <taxon>Bacteria</taxon>
        <taxon>Bacillati</taxon>
        <taxon>Bacillota</taxon>
        <taxon>Bacilli</taxon>
        <taxon>Bacillales</taxon>
        <taxon>Staphylococcaceae</taxon>
        <taxon>Staphylococcus</taxon>
    </lineage>
</organism>
<sequence>MFMGEYDHQLDTKGRMIIPSKFRYDLNERFIITRGLDKCLFGYTLDEWQQIEEKMKTLPMTKKDARKFMRMFFSGAVEVELDKQGRINIPQNLRKYANLTKECTVIGVSNRIEIWDRETWNDFYEESEESFEDIAEDLIDFDF</sequence>
<feature type="chain" id="PRO_0000108540" description="Transcriptional regulator MraZ">
    <location>
        <begin position="1"/>
        <end position="143"/>
    </location>
</feature>
<feature type="domain" description="SpoVT-AbrB 1" evidence="2">
    <location>
        <begin position="5"/>
        <end position="47"/>
    </location>
</feature>
<feature type="domain" description="SpoVT-AbrB 2" evidence="2">
    <location>
        <begin position="76"/>
        <end position="119"/>
    </location>
</feature>